<protein>
    <recommendedName>
        <fullName>Cell division cycle 20.5, cofactor of APC complex</fullName>
        <shortName>AtCDC20.5</shortName>
    </recommendedName>
</protein>
<comment type="function">
    <text evidence="1">Component of the anaphase promoting complex/cyclosome (APC/C), a cell cycle-regulated E3 ubiquitin-protein ligase complex that controls progression through mitosis and the G1 phase of the cell cycle.</text>
</comment>
<comment type="pathway">
    <text>Protein modification; protein ubiquitination.</text>
</comment>
<comment type="subunit">
    <text evidence="1 2 3">The APC/C is composed of at least 11 subunits that stay tightly associated throughout the cell cycle (By similarity). Binds to GIG1 and PYM. Part of the mitotic checkpoint complex (MCC); interacts with MAD2 and BUB1.</text>
</comment>
<comment type="subcellular location">
    <subcellularLocation>
        <location evidence="2">Nucleus</location>
    </subcellularLocation>
</comment>
<comment type="similarity">
    <text evidence="4">Belongs to the WD repeat CDC20/Fizzy family.</text>
</comment>
<comment type="online information" name="Arabidopsis APC/C subunits">
    <link uri="http://personal.rhul.ac.uk/ujba/110/apc/APC.htm"/>
</comment>
<evidence type="ECO:0000250" key="1"/>
<evidence type="ECO:0000269" key="2">
    <source>
    </source>
</evidence>
<evidence type="ECO:0000269" key="3">
    <source>
    </source>
</evidence>
<evidence type="ECO:0000305" key="4"/>
<sequence>MMNTSSHLKAQASCPLVEHFLRRKLSKENFDRFIPNRSAMDFDFANYALTQGRKRNVDEVTSASRKAYMTQLAEAMNQNRTRILAFRNKPKALLSSNHSDPPHQQPISVKPRRYIPQNSERVLDAPGIADDFYLNLLDWGSSNVLAIALGDTVYLWDASSGSTYKLVTIDEEEGPVTSINWTQDGLDLAIGLDNSEVQLWDCVSNRQVRTLRGGHESRVGSLAWNNHILTTGGMDGKIVNNDVRIRSSIVETYLGHTEEVCGLKWSESGKKLASGGNDNVVHIWDHRSVASSNPTRQWLHRFEEHTAAVRALAWCPFQASLLATGGGVGDGKIKFWNTHTGACLNSVETGSQVCSLLWSKSERELLSSHGFTQNQLTLWKYPSMVKMAELNGHTSRVLFMAQSPDGCTVASAAGDETLRLWNVFGEPPKTTKKAASKKYTDPFAHVNHIR</sequence>
<gene>
    <name type="primary">CDC20-5</name>
    <name type="synonym">CDC20_5</name>
    <name type="ordered locus">At5g27570</name>
    <name type="ORF">F15A18.30</name>
</gene>
<feature type="chain" id="PRO_0000423310" description="Cell division cycle 20.5, cofactor of APC complex">
    <location>
        <begin position="1"/>
        <end position="450"/>
    </location>
</feature>
<feature type="repeat" description="WD 1">
    <location>
        <begin position="129"/>
        <end position="166"/>
    </location>
</feature>
<feature type="repeat" description="WD 2">
    <location>
        <begin position="171"/>
        <end position="210"/>
    </location>
</feature>
<feature type="repeat" description="WD 3">
    <location>
        <begin position="214"/>
        <end position="251"/>
    </location>
</feature>
<feature type="repeat" description="WD 4">
    <location>
        <begin position="255"/>
        <end position="294"/>
    </location>
</feature>
<feature type="repeat" description="WD 5">
    <location>
        <begin position="304"/>
        <end position="346"/>
    </location>
</feature>
<feature type="repeat" description="WD 6">
    <location>
        <begin position="348"/>
        <end position="389"/>
    </location>
</feature>
<feature type="repeat" description="WD 7">
    <location>
        <begin position="392"/>
        <end position="431"/>
    </location>
</feature>
<name>CD205_ARATH</name>
<accession>Q3E906</accession>
<dbReference type="EMBL" id="AC007478">
    <property type="status" value="NOT_ANNOTATED_CDS"/>
    <property type="molecule type" value="Genomic_DNA"/>
</dbReference>
<dbReference type="EMBL" id="CP002688">
    <property type="protein sequence ID" value="AED93702.2"/>
    <property type="molecule type" value="Genomic_DNA"/>
</dbReference>
<dbReference type="SMR" id="Q3E906"/>
<dbReference type="ELM" id="Q3E906"/>
<dbReference type="FunCoup" id="Q3E906">
    <property type="interactions" value="1669"/>
</dbReference>
<dbReference type="IntAct" id="Q3E906">
    <property type="interactions" value="1"/>
</dbReference>
<dbReference type="STRING" id="3702.Q3E906"/>
<dbReference type="PaxDb" id="3702-AT5G27570.1"/>
<dbReference type="EnsemblPlants" id="AT5G27570.1">
    <property type="protein sequence ID" value="AT5G27570.1"/>
    <property type="gene ID" value="AT5G27570"/>
</dbReference>
<dbReference type="GeneID" id="832817"/>
<dbReference type="Gramene" id="AT5G27570.1">
    <property type="protein sequence ID" value="AT5G27570.1"/>
    <property type="gene ID" value="AT5G27570"/>
</dbReference>
<dbReference type="KEGG" id="ath:AT5G27570"/>
<dbReference type="Araport" id="AT5G27570"/>
<dbReference type="TAIR" id="AT5G27570">
    <property type="gene designation" value="CDC20.5"/>
</dbReference>
<dbReference type="eggNOG" id="KOG0305">
    <property type="taxonomic scope" value="Eukaryota"/>
</dbReference>
<dbReference type="HOGENOM" id="CLU_014831_6_1_1"/>
<dbReference type="InParanoid" id="Q3E906"/>
<dbReference type="OMA" id="DMDMAYF"/>
<dbReference type="UniPathway" id="UPA00143"/>
<dbReference type="PRO" id="PR:Q3E906"/>
<dbReference type="Proteomes" id="UP000006548">
    <property type="component" value="Chromosome 5"/>
</dbReference>
<dbReference type="ExpressionAtlas" id="Q3E906">
    <property type="expression patterns" value="baseline and differential"/>
</dbReference>
<dbReference type="GO" id="GO:0080008">
    <property type="term" value="C:Cul4-RING E3 ubiquitin ligase complex"/>
    <property type="evidence" value="ECO:0000250"/>
    <property type="project" value="TAIR"/>
</dbReference>
<dbReference type="GO" id="GO:0005634">
    <property type="term" value="C:nucleus"/>
    <property type="evidence" value="ECO:0000314"/>
    <property type="project" value="TAIR"/>
</dbReference>
<dbReference type="GO" id="GO:0010997">
    <property type="term" value="F:anaphase-promoting complex binding"/>
    <property type="evidence" value="ECO:0007669"/>
    <property type="project" value="InterPro"/>
</dbReference>
<dbReference type="GO" id="GO:0019900">
    <property type="term" value="F:kinase binding"/>
    <property type="evidence" value="ECO:0000353"/>
    <property type="project" value="UniProtKB"/>
</dbReference>
<dbReference type="GO" id="GO:0097027">
    <property type="term" value="F:ubiquitin-protein transferase activator activity"/>
    <property type="evidence" value="ECO:0007669"/>
    <property type="project" value="InterPro"/>
</dbReference>
<dbReference type="GO" id="GO:0051301">
    <property type="term" value="P:cell division"/>
    <property type="evidence" value="ECO:0007669"/>
    <property type="project" value="UniProtKB-KW"/>
</dbReference>
<dbReference type="GO" id="GO:0016567">
    <property type="term" value="P:protein ubiquitination"/>
    <property type="evidence" value="ECO:0007669"/>
    <property type="project" value="UniProtKB-UniPathway"/>
</dbReference>
<dbReference type="CDD" id="cd00200">
    <property type="entry name" value="WD40"/>
    <property type="match status" value="1"/>
</dbReference>
<dbReference type="FunFam" id="2.130.10.10:FF:000224">
    <property type="entry name" value="cell division cycle protein 20 homolog"/>
    <property type="match status" value="1"/>
</dbReference>
<dbReference type="Gene3D" id="2.130.10.10">
    <property type="entry name" value="YVTN repeat-like/Quinoprotein amine dehydrogenase"/>
    <property type="match status" value="1"/>
</dbReference>
<dbReference type="InterPro" id="IPR033010">
    <property type="entry name" value="Cdc20/Fizzy"/>
</dbReference>
<dbReference type="InterPro" id="IPR015943">
    <property type="entry name" value="WD40/YVTN_repeat-like_dom_sf"/>
</dbReference>
<dbReference type="InterPro" id="IPR056150">
    <property type="entry name" value="WD40_CDC20-Fz"/>
</dbReference>
<dbReference type="InterPro" id="IPR019775">
    <property type="entry name" value="WD40_repeat_CS"/>
</dbReference>
<dbReference type="InterPro" id="IPR036322">
    <property type="entry name" value="WD40_repeat_dom_sf"/>
</dbReference>
<dbReference type="InterPro" id="IPR001680">
    <property type="entry name" value="WD40_rpt"/>
</dbReference>
<dbReference type="PANTHER" id="PTHR19918">
    <property type="entry name" value="CELL DIVISION CYCLE 20 CDC20 FIZZY -RELATED"/>
    <property type="match status" value="1"/>
</dbReference>
<dbReference type="PANTHER" id="PTHR19918:SF8">
    <property type="entry name" value="FI02843P"/>
    <property type="match status" value="1"/>
</dbReference>
<dbReference type="Pfam" id="PF24807">
    <property type="entry name" value="WD40_CDC20-Fz"/>
    <property type="match status" value="1"/>
</dbReference>
<dbReference type="SMART" id="SM00320">
    <property type="entry name" value="WD40"/>
    <property type="match status" value="7"/>
</dbReference>
<dbReference type="SUPFAM" id="SSF50978">
    <property type="entry name" value="WD40 repeat-like"/>
    <property type="match status" value="1"/>
</dbReference>
<dbReference type="PROSITE" id="PS00678">
    <property type="entry name" value="WD_REPEATS_1"/>
    <property type="match status" value="3"/>
</dbReference>
<dbReference type="PROSITE" id="PS50082">
    <property type="entry name" value="WD_REPEATS_2"/>
    <property type="match status" value="3"/>
</dbReference>
<dbReference type="PROSITE" id="PS50294">
    <property type="entry name" value="WD_REPEATS_REGION"/>
    <property type="match status" value="1"/>
</dbReference>
<proteinExistence type="evidence at protein level"/>
<organism>
    <name type="scientific">Arabidopsis thaliana</name>
    <name type="common">Mouse-ear cress</name>
    <dbReference type="NCBI Taxonomy" id="3702"/>
    <lineage>
        <taxon>Eukaryota</taxon>
        <taxon>Viridiplantae</taxon>
        <taxon>Streptophyta</taxon>
        <taxon>Embryophyta</taxon>
        <taxon>Tracheophyta</taxon>
        <taxon>Spermatophyta</taxon>
        <taxon>Magnoliopsida</taxon>
        <taxon>eudicotyledons</taxon>
        <taxon>Gunneridae</taxon>
        <taxon>Pentapetalae</taxon>
        <taxon>rosids</taxon>
        <taxon>malvids</taxon>
        <taxon>Brassicales</taxon>
        <taxon>Brassicaceae</taxon>
        <taxon>Camelineae</taxon>
        <taxon>Arabidopsis</taxon>
    </lineage>
</organism>
<reference key="1">
    <citation type="journal article" date="2000" name="Nature">
        <title>Sequence and analysis of chromosome 5 of the plant Arabidopsis thaliana.</title>
        <authorList>
            <person name="Tabata S."/>
            <person name="Kaneko T."/>
            <person name="Nakamura Y."/>
            <person name="Kotani H."/>
            <person name="Kato T."/>
            <person name="Asamizu E."/>
            <person name="Miyajima N."/>
            <person name="Sasamoto S."/>
            <person name="Kimura T."/>
            <person name="Hosouchi T."/>
            <person name="Kawashima K."/>
            <person name="Kohara M."/>
            <person name="Matsumoto M."/>
            <person name="Matsuno A."/>
            <person name="Muraki A."/>
            <person name="Nakayama S."/>
            <person name="Nakazaki N."/>
            <person name="Naruo K."/>
            <person name="Okumura S."/>
            <person name="Shinpo S."/>
            <person name="Takeuchi C."/>
            <person name="Wada T."/>
            <person name="Watanabe A."/>
            <person name="Yamada M."/>
            <person name="Yasuda M."/>
            <person name="Sato S."/>
            <person name="de la Bastide M."/>
            <person name="Huang E."/>
            <person name="Spiegel L."/>
            <person name="Gnoj L."/>
            <person name="O'Shaughnessy A."/>
            <person name="Preston R."/>
            <person name="Habermann K."/>
            <person name="Murray J."/>
            <person name="Johnson D."/>
            <person name="Rohlfing T."/>
            <person name="Nelson J."/>
            <person name="Stoneking T."/>
            <person name="Pepin K."/>
            <person name="Spieth J."/>
            <person name="Sekhon M."/>
            <person name="Armstrong J."/>
            <person name="Becker M."/>
            <person name="Belter E."/>
            <person name="Cordum H."/>
            <person name="Cordes M."/>
            <person name="Courtney L."/>
            <person name="Courtney W."/>
            <person name="Dante M."/>
            <person name="Du H."/>
            <person name="Edwards J."/>
            <person name="Fryman J."/>
            <person name="Haakensen B."/>
            <person name="Lamar E."/>
            <person name="Latreille P."/>
            <person name="Leonard S."/>
            <person name="Meyer R."/>
            <person name="Mulvaney E."/>
            <person name="Ozersky P."/>
            <person name="Riley A."/>
            <person name="Strowmatt C."/>
            <person name="Wagner-McPherson C."/>
            <person name="Wollam A."/>
            <person name="Yoakum M."/>
            <person name="Bell M."/>
            <person name="Dedhia N."/>
            <person name="Parnell L."/>
            <person name="Shah R."/>
            <person name="Rodriguez M."/>
            <person name="Hoon See L."/>
            <person name="Vil D."/>
            <person name="Baker J."/>
            <person name="Kirchoff K."/>
            <person name="Toth K."/>
            <person name="King L."/>
            <person name="Bahret A."/>
            <person name="Miller B."/>
            <person name="Marra M.A."/>
            <person name="Martienssen R."/>
            <person name="McCombie W.R."/>
            <person name="Wilson R.K."/>
            <person name="Murphy G."/>
            <person name="Bancroft I."/>
            <person name="Volckaert G."/>
            <person name="Wambutt R."/>
            <person name="Duesterhoeft A."/>
            <person name="Stiekema W."/>
            <person name="Pohl T."/>
            <person name="Entian K.-D."/>
            <person name="Terryn N."/>
            <person name="Hartley N."/>
            <person name="Bent E."/>
            <person name="Johnson S."/>
            <person name="Langham S.-A."/>
            <person name="McCullagh B."/>
            <person name="Robben J."/>
            <person name="Grymonprez B."/>
            <person name="Zimmermann W."/>
            <person name="Ramsperger U."/>
            <person name="Wedler H."/>
            <person name="Balke K."/>
            <person name="Wedler E."/>
            <person name="Peters S."/>
            <person name="van Staveren M."/>
            <person name="Dirkse W."/>
            <person name="Mooijman P."/>
            <person name="Klein Lankhorst R."/>
            <person name="Weitzenegger T."/>
            <person name="Bothe G."/>
            <person name="Rose M."/>
            <person name="Hauf J."/>
            <person name="Berneiser S."/>
            <person name="Hempel S."/>
            <person name="Feldpausch M."/>
            <person name="Lamberth S."/>
            <person name="Villarroel R."/>
            <person name="Gielen J."/>
            <person name="Ardiles W."/>
            <person name="Bents O."/>
            <person name="Lemcke K."/>
            <person name="Kolesov G."/>
            <person name="Mayer K.F.X."/>
            <person name="Rudd S."/>
            <person name="Schoof H."/>
            <person name="Schueller C."/>
            <person name="Zaccaria P."/>
            <person name="Mewes H.-W."/>
            <person name="Bevan M."/>
            <person name="Fransz P.F."/>
        </authorList>
    </citation>
    <scope>NUCLEOTIDE SEQUENCE [LARGE SCALE GENOMIC DNA]</scope>
    <source>
        <strain>cv. Columbia</strain>
    </source>
</reference>
<reference key="2">
    <citation type="journal article" date="2017" name="Plant J.">
        <title>Araport11: a complete reannotation of the Arabidopsis thaliana reference genome.</title>
        <authorList>
            <person name="Cheng C.Y."/>
            <person name="Krishnakumar V."/>
            <person name="Chan A.P."/>
            <person name="Thibaud-Nissen F."/>
            <person name="Schobel S."/>
            <person name="Town C.D."/>
        </authorList>
    </citation>
    <scope>GENOME REANNOTATION</scope>
    <source>
        <strain>cv. Columbia</strain>
    </source>
</reference>
<reference key="3">
    <citation type="journal article" date="2003" name="Trends Plant Sci.">
        <title>First glance at the plant APC/C, a highly conserved ubiquitin-protein ligase.</title>
        <authorList>
            <person name="Capron A."/>
            <person name="Okresz L."/>
            <person name="Genschik P."/>
        </authorList>
    </citation>
    <scope>REVIEW</scope>
</reference>
<reference key="4">
    <citation type="journal article" date="2010" name="BMC Plant Biol.">
        <title>Genomic evolution and complexity of the Anaphase-promoting Complex (APC) in land plants.</title>
        <authorList>
            <person name="Lima M.D.F."/>
            <person name="Eloy N.B."/>
            <person name="Pegoraro C."/>
            <person name="Sagit R."/>
            <person name="Rojas C."/>
            <person name="Bretz T."/>
            <person name="Vargas L."/>
            <person name="Elofsson A."/>
            <person name="de Oliveira A.C."/>
            <person name="Hemerly A.S."/>
            <person name="Ferreira P.C.G."/>
        </authorList>
    </citation>
    <scope>REVIEW</scope>
    <scope>GENE FAMILY</scope>
</reference>
<reference key="5">
    <citation type="journal article" date="2011" name="Plant Cell">
        <title>GIGAS CELL1, a novel negative regulator of the anaphase-promoting complex/cyclosome, is required for proper mitotic progression and cell fate determination in Arabidopsis.</title>
        <authorList>
            <person name="Iwata E."/>
            <person name="Ikeda S."/>
            <person name="Matsunaga S."/>
            <person name="Kurata M."/>
            <person name="Yoshioka Y."/>
            <person name="Criqui M.-C."/>
            <person name="Genschik P."/>
            <person name="Ito M."/>
        </authorList>
    </citation>
    <scope>INTERACTION WITH GIG1 AND PYM</scope>
</reference>
<reference key="6">
    <citation type="journal article" date="2011" name="PLoS ONE">
        <title>Conserved CDC20 cell cycle functions are carried out by two of the five isoforms in Arabidopsis thaliana.</title>
        <authorList>
            <person name="Kevei Z."/>
            <person name="Baloban M."/>
            <person name="Da Ines O."/>
            <person name="Tiricz H."/>
            <person name="Kroll A."/>
            <person name="Regulski K."/>
            <person name="Mergaert P."/>
            <person name="Kondorosi E."/>
        </authorList>
    </citation>
    <scope>SUBCELLULAR LOCATION</scope>
    <scope>INTERACTION WITH MAD2 AND BUB1</scope>
</reference>
<keyword id="KW-0131">Cell cycle</keyword>
<keyword id="KW-0132">Cell division</keyword>
<keyword id="KW-0498">Mitosis</keyword>
<keyword id="KW-0539">Nucleus</keyword>
<keyword id="KW-1185">Reference proteome</keyword>
<keyword id="KW-0677">Repeat</keyword>
<keyword id="KW-0833">Ubl conjugation pathway</keyword>
<keyword id="KW-0853">WD repeat</keyword>